<keyword id="KW-0119">Carbohydrate metabolism</keyword>
<keyword id="KW-0320">Glycogen biosynthesis</keyword>
<keyword id="KW-0321">Glycogen metabolism</keyword>
<keyword id="KW-0328">Glycosyltransferase</keyword>
<keyword id="KW-0808">Transferase</keyword>
<comment type="function">
    <text evidence="1">Catalyzes the formation of the alpha-1,6-glucosidic linkages in glycogen by scission of a 1,4-alpha-linked oligosaccharide from growing alpha-1,4-glucan chains and the subsequent attachment of the oligosaccharide to the alpha-1,6 position.</text>
</comment>
<comment type="catalytic activity">
    <reaction evidence="1">
        <text>Transfers a segment of a (1-&gt;4)-alpha-D-glucan chain to a primary hydroxy group in a similar glucan chain.</text>
        <dbReference type="EC" id="2.4.1.18"/>
    </reaction>
</comment>
<comment type="pathway">
    <text evidence="1">Glycan biosynthesis; glycogen biosynthesis.</text>
</comment>
<comment type="subunit">
    <text evidence="1">Monomer.</text>
</comment>
<comment type="similarity">
    <text evidence="1">Belongs to the glycosyl hydrolase 13 family. GlgB subfamily.</text>
</comment>
<reference key="1">
    <citation type="journal article" date="2008" name="PLoS ONE">
        <title>Genome biology of Actinobacillus pleuropneumoniae JL03, an isolate of serotype 3 prevalent in China.</title>
        <authorList>
            <person name="Xu Z."/>
            <person name="Zhou Y."/>
            <person name="Li L."/>
            <person name="Zhou R."/>
            <person name="Xiao S."/>
            <person name="Wan Y."/>
            <person name="Zhang S."/>
            <person name="Wang K."/>
            <person name="Li W."/>
            <person name="Li L."/>
            <person name="Jin H."/>
            <person name="Kang M."/>
            <person name="Dalai B."/>
            <person name="Li T."/>
            <person name="Liu L."/>
            <person name="Cheng Y."/>
            <person name="Zhang L."/>
            <person name="Xu T."/>
            <person name="Zheng H."/>
            <person name="Pu S."/>
            <person name="Wang B."/>
            <person name="Gu W."/>
            <person name="Zhang X.L."/>
            <person name="Zhu G.-F."/>
            <person name="Wang S."/>
            <person name="Zhao G.-P."/>
            <person name="Chen H."/>
        </authorList>
    </citation>
    <scope>NUCLEOTIDE SEQUENCE [LARGE SCALE GENOMIC DNA]</scope>
    <source>
        <strain>JL03</strain>
    </source>
</reference>
<protein>
    <recommendedName>
        <fullName evidence="1">1,4-alpha-glucan branching enzyme GlgB</fullName>
        <ecNumber evidence="1">2.4.1.18</ecNumber>
    </recommendedName>
    <alternativeName>
        <fullName evidence="1">1,4-alpha-D-glucan:1,4-alpha-D-glucan 6-glucosyl-transferase</fullName>
    </alternativeName>
    <alternativeName>
        <fullName evidence="1">Alpha-(1-&gt;4)-glucan branching enzyme</fullName>
    </alternativeName>
    <alternativeName>
        <fullName evidence="1">Glycogen branching enzyme</fullName>
        <shortName evidence="1">BE</shortName>
    </alternativeName>
</protein>
<dbReference type="EC" id="2.4.1.18" evidence="1"/>
<dbReference type="EMBL" id="CP000687">
    <property type="protein sequence ID" value="ABY68953.1"/>
    <property type="molecule type" value="Genomic_DNA"/>
</dbReference>
<dbReference type="RefSeq" id="WP_012262791.1">
    <property type="nucleotide sequence ID" value="NC_010278.1"/>
</dbReference>
<dbReference type="SMR" id="B0BT96"/>
<dbReference type="CAZy" id="CBM48">
    <property type="family name" value="Carbohydrate-Binding Module Family 48"/>
</dbReference>
<dbReference type="CAZy" id="GH13">
    <property type="family name" value="Glycoside Hydrolase Family 13"/>
</dbReference>
<dbReference type="KEGG" id="apj:APJL_0362"/>
<dbReference type="HOGENOM" id="CLU_004245_3_2_6"/>
<dbReference type="UniPathway" id="UPA00164"/>
<dbReference type="Proteomes" id="UP000008547">
    <property type="component" value="Chromosome"/>
</dbReference>
<dbReference type="GO" id="GO:0005829">
    <property type="term" value="C:cytosol"/>
    <property type="evidence" value="ECO:0007669"/>
    <property type="project" value="TreeGrafter"/>
</dbReference>
<dbReference type="GO" id="GO:0003844">
    <property type="term" value="F:1,4-alpha-glucan branching enzyme activity"/>
    <property type="evidence" value="ECO:0007669"/>
    <property type="project" value="UniProtKB-UniRule"/>
</dbReference>
<dbReference type="GO" id="GO:0043169">
    <property type="term" value="F:cation binding"/>
    <property type="evidence" value="ECO:0007669"/>
    <property type="project" value="InterPro"/>
</dbReference>
<dbReference type="GO" id="GO:0004553">
    <property type="term" value="F:hydrolase activity, hydrolyzing O-glycosyl compounds"/>
    <property type="evidence" value="ECO:0007669"/>
    <property type="project" value="InterPro"/>
</dbReference>
<dbReference type="GO" id="GO:0005978">
    <property type="term" value="P:glycogen biosynthetic process"/>
    <property type="evidence" value="ECO:0007669"/>
    <property type="project" value="UniProtKB-UniRule"/>
</dbReference>
<dbReference type="CDD" id="cd11322">
    <property type="entry name" value="AmyAc_Glg_BE"/>
    <property type="match status" value="1"/>
</dbReference>
<dbReference type="CDD" id="cd02855">
    <property type="entry name" value="E_set_GBE_prok_N"/>
    <property type="match status" value="1"/>
</dbReference>
<dbReference type="FunFam" id="2.60.40.10:FF:000169">
    <property type="entry name" value="1,4-alpha-glucan branching enzyme GlgB"/>
    <property type="match status" value="1"/>
</dbReference>
<dbReference type="FunFam" id="2.60.40.1180:FF:000002">
    <property type="entry name" value="1,4-alpha-glucan branching enzyme GlgB"/>
    <property type="match status" value="1"/>
</dbReference>
<dbReference type="FunFam" id="3.20.20.80:FF:000003">
    <property type="entry name" value="1,4-alpha-glucan branching enzyme GlgB"/>
    <property type="match status" value="1"/>
</dbReference>
<dbReference type="Gene3D" id="3.20.20.80">
    <property type="entry name" value="Glycosidases"/>
    <property type="match status" value="1"/>
</dbReference>
<dbReference type="Gene3D" id="2.60.40.1180">
    <property type="entry name" value="Golgi alpha-mannosidase II"/>
    <property type="match status" value="1"/>
</dbReference>
<dbReference type="Gene3D" id="2.60.40.10">
    <property type="entry name" value="Immunoglobulins"/>
    <property type="match status" value="1"/>
</dbReference>
<dbReference type="HAMAP" id="MF_00685">
    <property type="entry name" value="GlgB"/>
    <property type="match status" value="1"/>
</dbReference>
<dbReference type="InterPro" id="IPR006048">
    <property type="entry name" value="A-amylase/branching_C"/>
</dbReference>
<dbReference type="InterPro" id="IPR037439">
    <property type="entry name" value="Branching_enzy"/>
</dbReference>
<dbReference type="InterPro" id="IPR006407">
    <property type="entry name" value="GlgB"/>
</dbReference>
<dbReference type="InterPro" id="IPR054169">
    <property type="entry name" value="GlgB_N"/>
</dbReference>
<dbReference type="InterPro" id="IPR044143">
    <property type="entry name" value="GlgB_N_E_set_prok"/>
</dbReference>
<dbReference type="InterPro" id="IPR006047">
    <property type="entry name" value="Glyco_hydro_13_cat_dom"/>
</dbReference>
<dbReference type="InterPro" id="IPR004193">
    <property type="entry name" value="Glyco_hydro_13_N"/>
</dbReference>
<dbReference type="InterPro" id="IPR013780">
    <property type="entry name" value="Glyco_hydro_b"/>
</dbReference>
<dbReference type="InterPro" id="IPR017853">
    <property type="entry name" value="Glycoside_hydrolase_SF"/>
</dbReference>
<dbReference type="InterPro" id="IPR013783">
    <property type="entry name" value="Ig-like_fold"/>
</dbReference>
<dbReference type="InterPro" id="IPR014756">
    <property type="entry name" value="Ig_E-set"/>
</dbReference>
<dbReference type="NCBIfam" id="TIGR01515">
    <property type="entry name" value="branching_enzym"/>
    <property type="match status" value="1"/>
</dbReference>
<dbReference type="NCBIfam" id="NF003811">
    <property type="entry name" value="PRK05402.1"/>
    <property type="match status" value="1"/>
</dbReference>
<dbReference type="NCBIfam" id="NF008967">
    <property type="entry name" value="PRK12313.1"/>
    <property type="match status" value="1"/>
</dbReference>
<dbReference type="PANTHER" id="PTHR43651">
    <property type="entry name" value="1,4-ALPHA-GLUCAN-BRANCHING ENZYME"/>
    <property type="match status" value="1"/>
</dbReference>
<dbReference type="PANTHER" id="PTHR43651:SF3">
    <property type="entry name" value="1,4-ALPHA-GLUCAN-BRANCHING ENZYME"/>
    <property type="match status" value="1"/>
</dbReference>
<dbReference type="Pfam" id="PF00128">
    <property type="entry name" value="Alpha-amylase"/>
    <property type="match status" value="1"/>
</dbReference>
<dbReference type="Pfam" id="PF02806">
    <property type="entry name" value="Alpha-amylase_C"/>
    <property type="match status" value="1"/>
</dbReference>
<dbReference type="Pfam" id="PF02922">
    <property type="entry name" value="CBM_48"/>
    <property type="match status" value="1"/>
</dbReference>
<dbReference type="Pfam" id="PF22019">
    <property type="entry name" value="GlgB_N"/>
    <property type="match status" value="1"/>
</dbReference>
<dbReference type="PIRSF" id="PIRSF000463">
    <property type="entry name" value="GlgB"/>
    <property type="match status" value="1"/>
</dbReference>
<dbReference type="SMART" id="SM00642">
    <property type="entry name" value="Aamy"/>
    <property type="match status" value="1"/>
</dbReference>
<dbReference type="SUPFAM" id="SSF51445">
    <property type="entry name" value="(Trans)glycosidases"/>
    <property type="match status" value="1"/>
</dbReference>
<dbReference type="SUPFAM" id="SSF81296">
    <property type="entry name" value="E set domains"/>
    <property type="match status" value="2"/>
</dbReference>
<dbReference type="SUPFAM" id="SSF51011">
    <property type="entry name" value="Glycosyl hydrolase domain"/>
    <property type="match status" value="1"/>
</dbReference>
<accession>B0BT96</accession>
<gene>
    <name evidence="1" type="primary">glgB</name>
    <name type="ordered locus">APJL_0362</name>
</gene>
<organism>
    <name type="scientific">Actinobacillus pleuropneumoniae serotype 3 (strain JL03)</name>
    <dbReference type="NCBI Taxonomy" id="434271"/>
    <lineage>
        <taxon>Bacteria</taxon>
        <taxon>Pseudomonadati</taxon>
        <taxon>Pseudomonadota</taxon>
        <taxon>Gammaproteobacteria</taxon>
        <taxon>Pasteurellales</taxon>
        <taxon>Pasteurellaceae</taxon>
        <taxon>Actinobacillus</taxon>
    </lineage>
</organism>
<evidence type="ECO:0000255" key="1">
    <source>
        <dbReference type="HAMAP-Rule" id="MF_00685"/>
    </source>
</evidence>
<feature type="chain" id="PRO_1000131806" description="1,4-alpha-glucan branching enzyme GlgB">
    <location>
        <begin position="1"/>
        <end position="777"/>
    </location>
</feature>
<feature type="active site" description="Nucleophile" evidence="1">
    <location>
        <position position="408"/>
    </location>
</feature>
<feature type="active site" description="Proton donor" evidence="1">
    <location>
        <position position="461"/>
    </location>
</feature>
<proteinExistence type="inferred from homology"/>
<name>GLGB_ACTPJ</name>
<sequence length="777" mass="89304">MKTYTYSKQDLSFIEQLSQAYCKDPFSYLGLHQAGDVSVIRVFLPEATTVKILSADGQILSEALKIDDSGLFVAQLSQQYSSLNYRLRVGYSLAEIDLEDPYRFTSSLLPMDNWLLAEGTHLRPYEILGAHLKTQEGVSGVHFSVWAPNARRVSVVGDFNYWDGRVNPMRFHAESGIWDIFLPNVEKGALYKFEILDSNGNIRLKSDPYAFASQFRPDTASVVTGLPEKIEVDAKLRHANEPDQPISIYEVHLGSWRRHLENNYWLNYEEIANELIPYVKDMGFTHIELLPITEYPFDGSWGYQPTGLYSPTSRFGSPDDLRTLIRKAHEAGINVILDWVVGHFPTDSHGLTEFDGSHLYEHQDPREGYHQDWNTLIFNYGRHEVFNYLSSNALYWTERFGIDGLRVDAVSSMIYRDYSRKDGEWIPNQYGGRENLEALDFLRRTNRMLKKEGHGAVVIAEESTSFAGITHSPTENGVGFDYKWNMGWMNDTLRYMSLDPIYRQYHHDWMTFGMMYQYSEKFVLPLSHDEVVHGKCSILGKMSGDCWQKFANLRAYYGYMWGYPGKKLLFMGNEFAQGREWNYNESLDWFLLGEQGGGWHKGVLNWVRDLNRTYQKYPALYQLDYDPAGFEWLVVDDWQQSVFAFERKAKNGESVIVVSNFTPVVRHNYRIGVRQDGTYTEILNSDAAYYEGSNVGNYGEIECEAIESHGKPFSIELSIPPLSTIFIACQPKPKEAVEAEQDIVKMAEVAMQKALKPTKKTVSVKAKAHKKAHKNKK</sequence>